<evidence type="ECO:0000255" key="1"/>
<evidence type="ECO:0000305" key="2"/>
<organism>
    <name type="scientific">Clostridium perfringens (strain 13 / Type A)</name>
    <dbReference type="NCBI Taxonomy" id="195102"/>
    <lineage>
        <taxon>Bacteria</taxon>
        <taxon>Bacillati</taxon>
        <taxon>Bacillota</taxon>
        <taxon>Clostridia</taxon>
        <taxon>Eubacteriales</taxon>
        <taxon>Clostridiaceae</taxon>
        <taxon>Clostridium</taxon>
    </lineage>
</organism>
<keyword id="KW-1003">Cell membrane</keyword>
<keyword id="KW-0472">Membrane</keyword>
<keyword id="KW-1185">Reference proteome</keyword>
<keyword id="KW-0812">Transmembrane</keyword>
<keyword id="KW-1133">Transmembrane helix</keyword>
<keyword id="KW-0813">Transport</keyword>
<feature type="chain" id="PRO_0000165974" description="Putative purine permease CPE0397">
    <location>
        <begin position="1"/>
        <end position="452"/>
    </location>
</feature>
<feature type="transmembrane region" description="Helical" evidence="1">
    <location>
        <begin position="34"/>
        <end position="54"/>
    </location>
</feature>
<feature type="transmembrane region" description="Helical" evidence="1">
    <location>
        <begin position="58"/>
        <end position="78"/>
    </location>
</feature>
<feature type="transmembrane region" description="Helical" evidence="1">
    <location>
        <begin position="83"/>
        <end position="103"/>
    </location>
</feature>
<feature type="transmembrane region" description="Helical" evidence="1">
    <location>
        <begin position="108"/>
        <end position="128"/>
    </location>
</feature>
<feature type="transmembrane region" description="Helical" evidence="1">
    <location>
        <begin position="138"/>
        <end position="158"/>
    </location>
</feature>
<feature type="transmembrane region" description="Helical" evidence="1">
    <location>
        <begin position="172"/>
        <end position="192"/>
    </location>
</feature>
<feature type="transmembrane region" description="Helical" evidence="1">
    <location>
        <begin position="201"/>
        <end position="221"/>
    </location>
</feature>
<feature type="transmembrane region" description="Helical" evidence="1">
    <location>
        <begin position="250"/>
        <end position="270"/>
    </location>
</feature>
<feature type="transmembrane region" description="Helical" evidence="1">
    <location>
        <begin position="326"/>
        <end position="346"/>
    </location>
</feature>
<feature type="transmembrane region" description="Helical" evidence="1">
    <location>
        <begin position="348"/>
        <end position="368"/>
    </location>
</feature>
<feature type="transmembrane region" description="Helical" evidence="1">
    <location>
        <begin position="383"/>
        <end position="403"/>
    </location>
</feature>
<feature type="transmembrane region" description="Helical" evidence="1">
    <location>
        <begin position="412"/>
        <end position="432"/>
    </location>
</feature>
<feature type="sequence conflict" description="In Ref. 2." evidence="2" ref="2">
    <original>VTGT</original>
    <variation>ARVP</variation>
    <location>
        <begin position="143"/>
        <end position="146"/>
    </location>
</feature>
<feature type="sequence conflict" description="In Ref. 2; CAA50688." evidence="2" ref="2">
    <original>V</original>
    <variation>I</variation>
    <location>
        <position position="186"/>
    </location>
</feature>
<feature type="sequence conflict" description="In Ref. 2; CAA50688." evidence="2" ref="2">
    <original>P</original>
    <variation>S</variation>
    <location>
        <position position="225"/>
    </location>
</feature>
<feature type="sequence conflict" description="In Ref. 2." evidence="2" ref="2">
    <original>C</original>
    <variation>M</variation>
    <location>
        <position position="266"/>
    </location>
</feature>
<feature type="sequence conflict" description="In Ref. 2." evidence="2" ref="2">
    <original>AIGETSNIDI</original>
    <variation>SYWRDILLLIF</variation>
    <location>
        <begin position="269"/>
        <end position="278"/>
    </location>
</feature>
<feature type="sequence conflict" description="In Ref. 2; CAA50688." evidence="2" ref="2">
    <original>K</original>
    <variation>T</variation>
    <location>
        <position position="449"/>
    </location>
</feature>
<protein>
    <recommendedName>
        <fullName>Putative purine permease CPE0397</fullName>
    </recommendedName>
</protein>
<gene>
    <name type="primary">cpx</name>
    <name type="ordered locus">CPE0397</name>
</gene>
<reference key="1">
    <citation type="journal article" date="2002" name="Proc. Natl. Acad. Sci. U.S.A.">
        <title>Complete genome sequence of Clostridium perfringens, an anaerobic flesh-eater.</title>
        <authorList>
            <person name="Shimizu T."/>
            <person name="Ohtani K."/>
            <person name="Hirakawa H."/>
            <person name="Ohshima K."/>
            <person name="Yamashita A."/>
            <person name="Shiba T."/>
            <person name="Ogasawara N."/>
            <person name="Hattori M."/>
            <person name="Kuhara S."/>
            <person name="Hayashi H."/>
        </authorList>
    </citation>
    <scope>NUCLEOTIDE SEQUENCE [LARGE SCALE GENOMIC DNA]</scope>
    <source>
        <strain>13 / Type A</strain>
    </source>
</reference>
<reference key="2">
    <citation type="journal article" date="1994" name="Microbiology">
        <title>A complex array of Hpr consensus DNA recognition sequences proximal to the enterotoxin gene in Clostridium perfringens type A.</title>
        <authorList>
            <person name="Brynestad S."/>
            <person name="Iwanejko L.A."/>
            <person name="Stewart G.S."/>
            <person name="Granum P.E."/>
        </authorList>
    </citation>
    <scope>NUCLEOTIDE SEQUENCE [GENOMIC DNA] OF 143-452</scope>
    <source>
        <strain>ATCC 12917 / NCTC 8239 / Type A</strain>
    </source>
</reference>
<reference key="3">
    <citation type="submission" date="1997-02" db="EMBL/GenBank/DDBJ databases">
        <authorList>
            <person name="Brynestad S."/>
        </authorList>
    </citation>
    <scope>SEQUENCE REVISION</scope>
</reference>
<dbReference type="EMBL" id="BA000016">
    <property type="protein sequence ID" value="BAB80103.1"/>
    <property type="molecule type" value="Genomic_DNA"/>
</dbReference>
<dbReference type="EMBL" id="X71844">
    <property type="protein sequence ID" value="CAA50688.1"/>
    <property type="molecule type" value="Genomic_DNA"/>
</dbReference>
<dbReference type="RefSeq" id="WP_003473969.1">
    <property type="nucleotide sequence ID" value="NC_003366.1"/>
</dbReference>
<dbReference type="SMR" id="P50487"/>
<dbReference type="STRING" id="195102.gene:10489653"/>
<dbReference type="TCDB" id="2.A.40.2.1">
    <property type="family name" value="the nucleobase/ascorbate transporter (nat) or nucleobase:cation symporter-2 (ncs2) family"/>
</dbReference>
<dbReference type="KEGG" id="cpe:CPE0397"/>
<dbReference type="HOGENOM" id="CLU_017959_8_2_9"/>
<dbReference type="Proteomes" id="UP000000818">
    <property type="component" value="Chromosome"/>
</dbReference>
<dbReference type="GO" id="GO:0005886">
    <property type="term" value="C:plasma membrane"/>
    <property type="evidence" value="ECO:0007669"/>
    <property type="project" value="UniProtKB-SubCell"/>
</dbReference>
<dbReference type="GO" id="GO:0042907">
    <property type="term" value="F:xanthine transmembrane transporter activity"/>
    <property type="evidence" value="ECO:0007669"/>
    <property type="project" value="TreeGrafter"/>
</dbReference>
<dbReference type="InterPro" id="IPR006043">
    <property type="entry name" value="NCS2"/>
</dbReference>
<dbReference type="InterPro" id="IPR017588">
    <property type="entry name" value="UacT-like"/>
</dbReference>
<dbReference type="InterPro" id="IPR006042">
    <property type="entry name" value="Xan_ur_permease"/>
</dbReference>
<dbReference type="NCBIfam" id="TIGR00801">
    <property type="entry name" value="ncs2"/>
    <property type="match status" value="1"/>
</dbReference>
<dbReference type="NCBIfam" id="NF037981">
    <property type="entry name" value="NCS2_1"/>
    <property type="match status" value="1"/>
</dbReference>
<dbReference type="NCBIfam" id="TIGR03173">
    <property type="entry name" value="pbuX"/>
    <property type="match status" value="1"/>
</dbReference>
<dbReference type="PANTHER" id="PTHR42810">
    <property type="entry name" value="PURINE PERMEASE C1399.01C-RELATED"/>
    <property type="match status" value="1"/>
</dbReference>
<dbReference type="PANTHER" id="PTHR42810:SF2">
    <property type="entry name" value="PURINE PERMEASE C1399.01C-RELATED"/>
    <property type="match status" value="1"/>
</dbReference>
<dbReference type="Pfam" id="PF00860">
    <property type="entry name" value="Xan_ur_permease"/>
    <property type="match status" value="1"/>
</dbReference>
<dbReference type="PROSITE" id="PS01116">
    <property type="entry name" value="XANTH_URACIL_PERMASE"/>
    <property type="match status" value="1"/>
</dbReference>
<accession>P50487</accession>
<accession>P94653</accession>
<name>Y397_CLOPE</name>
<proteinExistence type="inferred from homology"/>
<sequence>MEKQNLKNTEVNLIYGVDDDLDLPKKVLFGLQHIFAAFGGIIVVPLVIATSLGFDSKVTTALISASILGSGLATIIQAKGVGKVGARVACIMGTDFTFVSPAISVGSVLGLPGIIGATILGSLFEVILSFFIKPLMKFFPPLVTGTVVALIGLTLLPVSIDWAAGGAGSANYASLENLAVAMFVLVITLLLNNYGKGMISSASILIGIVVGYIVCIPLGLVDFTPVKEASWLSFPKILEFGVTFDAKAVMAFIPAYFVATIGTVGCLKAIGETSNIDIGDKRVAAGVLSDGVGSALGGLVGSCPNTSFSQNIGIISLTKVASRHVAVMAGILLVILGFLPKVAAIITGIPNPVLGGVGIMMFGTVAAAGIRTLSNIKLTERNLLIIAISMGLGLGVTFRPDVIHNLPEAIRMIFSSGISTGTIAALILNAVLKESPTSMEFENMYDEEKKAS</sequence>
<comment type="subcellular location">
    <subcellularLocation>
        <location evidence="2">Cell membrane</location>
        <topology evidence="2">Multi-pass membrane protein</topology>
    </subcellularLocation>
</comment>
<comment type="similarity">
    <text evidence="2">Belongs to the nucleobase:cation symporter-2 (NCS2) (TC 2.A.40) family.</text>
</comment>